<keyword id="KW-0963">Cytoplasm</keyword>
<keyword id="KW-0488">Methylation</keyword>
<keyword id="KW-0597">Phosphoprotein</keyword>
<keyword id="KW-1185">Reference proteome</keyword>
<sequence length="264" mass="29762">MLSHSAMVKQRKQQASAITKEIHGHDVDGMDLGKKVSIPRDIMIEELSHFSNRGARLFKMRQRRSDKYTFENFQYESRAQINHNIAMQNGRVDGSNLEGGSQQGPSTPPNTPDPRSPPNPENIAPGYSGPLKEIPPERFNTTAVPKYYRSPWEQAIGSDPELLEALYPKLFKPEGKAELRDYRSFNRVATPFGGFEKASKMVKFKVPDFELLLLTDPRFLAFANPLSGRRCFNRAPKGWVSENIPVVITTEPTEDATVPESDDL</sequence>
<accession>Q9JJW5</accession>
<dbReference type="EMBL" id="AY013296">
    <property type="protein sequence ID" value="AAG38939.1"/>
    <property type="molecule type" value="mRNA"/>
</dbReference>
<dbReference type="EMBL" id="AJ252148">
    <property type="protein sequence ID" value="CAB92972.1"/>
    <property type="molecule type" value="mRNA"/>
</dbReference>
<dbReference type="EMBL" id="BC024360">
    <property type="protein sequence ID" value="AAH24360.1"/>
    <property type="molecule type" value="mRNA"/>
</dbReference>
<dbReference type="CCDS" id="CCDS17816.1"/>
<dbReference type="RefSeq" id="NP_067478.1">
    <property type="nucleotide sequence ID" value="NM_021503.2"/>
</dbReference>
<dbReference type="BioGRID" id="208477">
    <property type="interactions" value="3"/>
</dbReference>
<dbReference type="CORUM" id="Q9JJW5"/>
<dbReference type="FunCoup" id="Q9JJW5">
    <property type="interactions" value="161"/>
</dbReference>
<dbReference type="IntAct" id="Q9JJW5">
    <property type="interactions" value="2"/>
</dbReference>
<dbReference type="STRING" id="10090.ENSMUSP00000029761"/>
<dbReference type="GlyGen" id="Q9JJW5">
    <property type="glycosylation" value="1 site, 1 O-linked glycan (1 site)"/>
</dbReference>
<dbReference type="iPTMnet" id="Q9JJW5"/>
<dbReference type="PhosphoSitePlus" id="Q9JJW5"/>
<dbReference type="jPOST" id="Q9JJW5"/>
<dbReference type="PaxDb" id="10090-ENSMUSP00000029761"/>
<dbReference type="ProteomicsDB" id="287659"/>
<dbReference type="Antibodypedia" id="26655">
    <property type="antibodies" value="187 antibodies from 25 providers"/>
</dbReference>
<dbReference type="DNASU" id="59006"/>
<dbReference type="Ensembl" id="ENSMUST00000029761.14">
    <property type="protein sequence ID" value="ENSMUSP00000029761.8"/>
    <property type="gene ID" value="ENSMUSG00000028116.14"/>
</dbReference>
<dbReference type="GeneID" id="59006"/>
<dbReference type="KEGG" id="mmu:59006"/>
<dbReference type="UCSC" id="uc008rfe.2">
    <property type="organism name" value="mouse"/>
</dbReference>
<dbReference type="AGR" id="MGI:1913063"/>
<dbReference type="CTD" id="51778"/>
<dbReference type="MGI" id="MGI:1913063">
    <property type="gene designation" value="Myoz2"/>
</dbReference>
<dbReference type="VEuPathDB" id="HostDB:ENSMUSG00000028116"/>
<dbReference type="eggNOG" id="ENOG502QVA2">
    <property type="taxonomic scope" value="Eukaryota"/>
</dbReference>
<dbReference type="GeneTree" id="ENSGT00950000183027"/>
<dbReference type="HOGENOM" id="CLU_071316_1_1_1"/>
<dbReference type="InParanoid" id="Q9JJW5"/>
<dbReference type="OMA" id="INHRIAM"/>
<dbReference type="OrthoDB" id="9895914at2759"/>
<dbReference type="PhylomeDB" id="Q9JJW5"/>
<dbReference type="TreeFam" id="TF331748"/>
<dbReference type="BioGRID-ORCS" id="59006">
    <property type="hits" value="2 hits in 77 CRISPR screens"/>
</dbReference>
<dbReference type="PRO" id="PR:Q9JJW5"/>
<dbReference type="Proteomes" id="UP000000589">
    <property type="component" value="Chromosome 3"/>
</dbReference>
<dbReference type="RNAct" id="Q9JJW5">
    <property type="molecule type" value="protein"/>
</dbReference>
<dbReference type="Bgee" id="ENSMUSG00000028116">
    <property type="expression patterns" value="Expressed in interventricular septum and 90 other cell types or tissues"/>
</dbReference>
<dbReference type="ExpressionAtlas" id="Q9JJW5">
    <property type="expression patterns" value="baseline and differential"/>
</dbReference>
<dbReference type="GO" id="GO:0015629">
    <property type="term" value="C:actin cytoskeleton"/>
    <property type="evidence" value="ECO:0000314"/>
    <property type="project" value="MGI"/>
</dbReference>
<dbReference type="GO" id="GO:0030018">
    <property type="term" value="C:Z disc"/>
    <property type="evidence" value="ECO:0000314"/>
    <property type="project" value="BHF-UCL"/>
</dbReference>
<dbReference type="GO" id="GO:0003779">
    <property type="term" value="F:actin binding"/>
    <property type="evidence" value="ECO:0000353"/>
    <property type="project" value="MGI"/>
</dbReference>
<dbReference type="GO" id="GO:0031433">
    <property type="term" value="F:telethonin binding"/>
    <property type="evidence" value="ECO:0007669"/>
    <property type="project" value="Ensembl"/>
</dbReference>
<dbReference type="GO" id="GO:0070885">
    <property type="term" value="P:negative regulation of calcineurin-NFAT signaling cascade"/>
    <property type="evidence" value="ECO:0000314"/>
    <property type="project" value="BHF-UCL"/>
</dbReference>
<dbReference type="GO" id="GO:0000122">
    <property type="term" value="P:negative regulation of transcription by RNA polymerase II"/>
    <property type="evidence" value="ECO:0000314"/>
    <property type="project" value="BHF-UCL"/>
</dbReference>
<dbReference type="GO" id="GO:0045214">
    <property type="term" value="P:sarcomere organization"/>
    <property type="evidence" value="ECO:0000314"/>
    <property type="project" value="BHF-UCL"/>
</dbReference>
<dbReference type="GO" id="GO:0043503">
    <property type="term" value="P:skeletal muscle fiber adaptation"/>
    <property type="evidence" value="ECO:0000314"/>
    <property type="project" value="BHF-UCL"/>
</dbReference>
<dbReference type="GO" id="GO:0007519">
    <property type="term" value="P:skeletal muscle tissue development"/>
    <property type="evidence" value="ECO:0000314"/>
    <property type="project" value="BHF-UCL"/>
</dbReference>
<dbReference type="InterPro" id="IPR008438">
    <property type="entry name" value="MYOZ"/>
</dbReference>
<dbReference type="PANTHER" id="PTHR15941">
    <property type="entry name" value="MYOZENIN"/>
    <property type="match status" value="1"/>
</dbReference>
<dbReference type="PANTHER" id="PTHR15941:SF9">
    <property type="entry name" value="MYOZENIN-2"/>
    <property type="match status" value="1"/>
</dbReference>
<dbReference type="Pfam" id="PF05556">
    <property type="entry name" value="Calsarcin"/>
    <property type="match status" value="1"/>
</dbReference>
<protein>
    <recommendedName>
        <fullName>Myozenin-2</fullName>
    </recommendedName>
    <alternativeName>
        <fullName>Calsarcin-1</fullName>
    </alternativeName>
    <alternativeName>
        <fullName>FATZ-related protein 2</fullName>
    </alternativeName>
</protein>
<proteinExistence type="evidence at protein level"/>
<evidence type="ECO:0000250" key="1"/>
<evidence type="ECO:0000256" key="2">
    <source>
        <dbReference type="SAM" id="MobiDB-lite"/>
    </source>
</evidence>
<evidence type="ECO:0000269" key="3">
    <source>
    </source>
</evidence>
<evidence type="ECO:0000269" key="4">
    <source>
    </source>
</evidence>
<evidence type="ECO:0000305" key="5"/>
<evidence type="ECO:0000312" key="6">
    <source>
        <dbReference type="EMBL" id="AAG38939.1"/>
    </source>
</evidence>
<evidence type="ECO:0000312" key="7">
    <source>
        <dbReference type="EMBL" id="AAH24360.1"/>
    </source>
</evidence>
<evidence type="ECO:0000312" key="8">
    <source>
        <dbReference type="EMBL" id="CAB92972.1"/>
    </source>
</evidence>
<evidence type="ECO:0000312" key="9">
    <source>
        <dbReference type="MGI" id="MGI:1913063"/>
    </source>
</evidence>
<evidence type="ECO:0007744" key="10">
    <source>
    </source>
</evidence>
<evidence type="ECO:0007744" key="11">
    <source>
    </source>
</evidence>
<evidence type="ECO:0007744" key="12">
    <source>
    </source>
</evidence>
<gene>
    <name evidence="9" type="primary">Myoz2</name>
</gene>
<reference evidence="5 6" key="1">
    <citation type="journal article" date="2000" name="Proc. Natl. Acad. Sci. U.S.A.">
        <title>Calsarcins, a novel family of sarcomeric calcineurin-binding proteins.</title>
        <authorList>
            <person name="Frey N."/>
            <person name="Richardson J.A."/>
            <person name="Olson E.N."/>
        </authorList>
    </citation>
    <scope>NUCLEOTIDE SEQUENCE [MRNA]</scope>
    <scope>SUBCELLULAR LOCATION</scope>
    <scope>TISSUE SPECIFICITY</scope>
    <scope>DEVELOPMENTAL STAGE</scope>
</reference>
<reference evidence="5 8" key="2">
    <citation type="submission" date="2000-01" db="EMBL/GenBank/DDBJ databases">
        <title>Full length sequencing of some human and murine muscular transcripts (Telethon Italy project B41).</title>
        <authorList>
            <person name="Ievolella C."/>
            <person name="Zara I."/>
            <person name="Millino C."/>
            <person name="Faulkner G."/>
            <person name="Lanfranchi G."/>
        </authorList>
    </citation>
    <scope>NUCLEOTIDE SEQUENCE [LARGE SCALE MRNA]</scope>
    <source>
        <tissue evidence="5">Skeletal muscle</tissue>
    </source>
</reference>
<reference evidence="7" key="3">
    <citation type="journal article" date="2004" name="Genome Res.">
        <title>The status, quality, and expansion of the NIH full-length cDNA project: the Mammalian Gene Collection (MGC).</title>
        <authorList>
            <consortium name="The MGC Project Team"/>
        </authorList>
    </citation>
    <scope>NUCLEOTIDE SEQUENCE [LARGE SCALE MRNA]</scope>
    <source>
        <strain evidence="7">Czech II</strain>
        <tissue evidence="7">Mammary gland</tissue>
    </source>
</reference>
<reference evidence="5" key="4">
    <citation type="journal article" date="2004" name="Nat. Med.">
        <title>Mice lacking calsarcin-1 are sensitized to calcineurin signaling and show accelerated cardiomyopathy in response to pathological biomechanical stress.</title>
        <authorList>
            <person name="Frey N."/>
            <person name="Barrientos T."/>
            <person name="Shelton J.M."/>
            <person name="Frank D."/>
            <person name="Rutten H."/>
            <person name="Gehring D."/>
            <person name="Kuhn C."/>
            <person name="Lutz M."/>
            <person name="Rothermel B."/>
            <person name="Bassel-Duby R."/>
            <person name="Richardson J.A."/>
            <person name="Katus H.A."/>
            <person name="Hill J.A."/>
            <person name="Olson E.N."/>
        </authorList>
    </citation>
    <scope>FUNCTION</scope>
</reference>
<reference key="5">
    <citation type="journal article" date="2007" name="Proc. Natl. Acad. Sci. U.S.A.">
        <title>Large-scale phosphorylation analysis of mouse liver.</title>
        <authorList>
            <person name="Villen J."/>
            <person name="Beausoleil S.A."/>
            <person name="Gerber S.A."/>
            <person name="Gygi S.P."/>
        </authorList>
    </citation>
    <scope>PHOSPHORYLATION [LARGE SCALE ANALYSIS] AT THR-111</scope>
    <scope>IDENTIFICATION BY MASS SPECTROMETRY [LARGE SCALE ANALYSIS]</scope>
    <source>
        <tissue>Liver</tissue>
    </source>
</reference>
<reference key="6">
    <citation type="journal article" date="2010" name="Cell">
        <title>A tissue-specific atlas of mouse protein phosphorylation and expression.</title>
        <authorList>
            <person name="Huttlin E.L."/>
            <person name="Jedrychowski M.P."/>
            <person name="Elias J.E."/>
            <person name="Goswami T."/>
            <person name="Rad R."/>
            <person name="Beausoleil S.A."/>
            <person name="Villen J."/>
            <person name="Haas W."/>
            <person name="Sowa M.E."/>
            <person name="Gygi S.P."/>
        </authorList>
    </citation>
    <scope>PHOSPHORYLATION [LARGE SCALE ANALYSIS] AT SER-101; THR-107; THR-111 AND SER-116</scope>
    <scope>IDENTIFICATION BY MASS SPECTROMETRY [LARGE SCALE ANALYSIS]</scope>
    <source>
        <tissue>Brown adipose tissue</tissue>
        <tissue>Heart</tissue>
        <tissue>Lung</tissue>
    </source>
</reference>
<reference key="7">
    <citation type="journal article" date="2014" name="Mol. Cell. Proteomics">
        <title>Immunoaffinity enrichment and mass spectrometry analysis of protein methylation.</title>
        <authorList>
            <person name="Guo A."/>
            <person name="Gu H."/>
            <person name="Zhou J."/>
            <person name="Mulhern D."/>
            <person name="Wang Y."/>
            <person name="Lee K.A."/>
            <person name="Yang V."/>
            <person name="Aguiar M."/>
            <person name="Kornhauser J."/>
            <person name="Jia X."/>
            <person name="Ren J."/>
            <person name="Beausoleil S.A."/>
            <person name="Silva J.C."/>
            <person name="Vemulapalli V."/>
            <person name="Bedford M.T."/>
            <person name="Comb M.J."/>
        </authorList>
    </citation>
    <scope>METHYLATION [LARGE SCALE ANALYSIS] AT ARG-53</scope>
    <scope>IDENTIFICATION BY MASS SPECTROMETRY [LARGE SCALE ANALYSIS]</scope>
    <source>
        <tissue>Brain</tissue>
    </source>
</reference>
<name>MYOZ2_MOUSE</name>
<feature type="chain" id="PRO_0000111100" description="Myozenin-2">
    <location>
        <begin position="1"/>
        <end position="264"/>
    </location>
</feature>
<feature type="region of interest" description="Disordered" evidence="2">
    <location>
        <begin position="90"/>
        <end position="135"/>
    </location>
</feature>
<feature type="compositionally biased region" description="Pro residues" evidence="2">
    <location>
        <begin position="106"/>
        <end position="120"/>
    </location>
</feature>
<feature type="modified residue" description="Omega-N-methylarginine" evidence="12">
    <location>
        <position position="53"/>
    </location>
</feature>
<feature type="modified residue" description="Phosphoserine" evidence="11">
    <location>
        <position position="101"/>
    </location>
</feature>
<feature type="modified residue" description="Phosphothreonine" evidence="11">
    <location>
        <position position="107"/>
    </location>
</feature>
<feature type="modified residue" description="Phosphothreonine" evidence="10 11">
    <location>
        <position position="111"/>
    </location>
</feature>
<feature type="modified residue" description="Phosphoserine" evidence="11">
    <location>
        <position position="116"/>
    </location>
</feature>
<comment type="function">
    <text evidence="4">Myozenins may serve as intracellular binding proteins involved in linking Z line proteins such as alpha-actinin, gamma-filamin, TCAP/telethonin, LDB3/ZASP and localizing calcineurin signaling to the sarcomere. Plays an important role in the modulation of calcineurin signaling. May play a role in myofibrillogenesis.</text>
</comment>
<comment type="subunit">
    <text evidence="1">Interacts via its C-terminus with spectrin repeats 3 and 4 of ACTN2. Interacts with ACTN1, LDB3, MYOT and PPP3CA (By similarity).</text>
</comment>
<comment type="subcellular location">
    <subcellularLocation>
        <location evidence="3">Cytoplasm</location>
        <location evidence="3">Myofibril</location>
        <location evidence="3">Sarcomere</location>
        <location evidence="3">Z line</location>
    </subcellularLocation>
    <text>Colocalizes with ACTN1 and PPP3CA at the Z-line of heart and skeletal muscle.</text>
</comment>
<comment type="tissue specificity">
    <text evidence="3">Expressed specifically in heart and skeletal muscle. In skeletal muscle, localized to the soleus and plantaris muscles, which are predominantly composed of slow-twitch fibers.</text>
</comment>
<comment type="developmental stage">
    <text evidence="3">At 9.5 dpc, expressed weakly in heart. Higher levels of expression detected at 12.5 dpc and 15.5 dpc in both cardiac and skeletal muscle.</text>
</comment>
<comment type="similarity">
    <text evidence="5">Belongs to the myozenin family.</text>
</comment>
<organism>
    <name type="scientific">Mus musculus</name>
    <name type="common">Mouse</name>
    <dbReference type="NCBI Taxonomy" id="10090"/>
    <lineage>
        <taxon>Eukaryota</taxon>
        <taxon>Metazoa</taxon>
        <taxon>Chordata</taxon>
        <taxon>Craniata</taxon>
        <taxon>Vertebrata</taxon>
        <taxon>Euteleostomi</taxon>
        <taxon>Mammalia</taxon>
        <taxon>Eutheria</taxon>
        <taxon>Euarchontoglires</taxon>
        <taxon>Glires</taxon>
        <taxon>Rodentia</taxon>
        <taxon>Myomorpha</taxon>
        <taxon>Muroidea</taxon>
        <taxon>Muridae</taxon>
        <taxon>Murinae</taxon>
        <taxon>Mus</taxon>
        <taxon>Mus</taxon>
    </lineage>
</organism>